<feature type="chain" id="PRO_1000143907" description="Small ribosomal subunit protein uS14">
    <location>
        <begin position="1"/>
        <end position="61"/>
    </location>
</feature>
<feature type="binding site" evidence="1">
    <location>
        <position position="24"/>
    </location>
    <ligand>
        <name>Zn(2+)</name>
        <dbReference type="ChEBI" id="CHEBI:29105"/>
    </ligand>
</feature>
<feature type="binding site" evidence="1">
    <location>
        <position position="27"/>
    </location>
    <ligand>
        <name>Zn(2+)</name>
        <dbReference type="ChEBI" id="CHEBI:29105"/>
    </ligand>
</feature>
<feature type="binding site" evidence="1">
    <location>
        <position position="40"/>
    </location>
    <ligand>
        <name>Zn(2+)</name>
        <dbReference type="ChEBI" id="CHEBI:29105"/>
    </ligand>
</feature>
<feature type="binding site" evidence="1">
    <location>
        <position position="43"/>
    </location>
    <ligand>
        <name>Zn(2+)</name>
        <dbReference type="ChEBI" id="CHEBI:29105"/>
    </ligand>
</feature>
<sequence length="61" mass="7043">MAKKSMIAKAQRKPKFQVRAYTRCRICGRPHSVYRDFGLCRVCLRKMGSEGLIPGLRKASW</sequence>
<keyword id="KW-0479">Metal-binding</keyword>
<keyword id="KW-1185">Reference proteome</keyword>
<keyword id="KW-0687">Ribonucleoprotein</keyword>
<keyword id="KW-0689">Ribosomal protein</keyword>
<keyword id="KW-0694">RNA-binding</keyword>
<keyword id="KW-0699">rRNA-binding</keyword>
<keyword id="KW-0862">Zinc</keyword>
<reference key="1">
    <citation type="journal article" date="2009" name="J. Bacteriol.">
        <title>The complete genome sequence of Helicobacter pylori strain G27.</title>
        <authorList>
            <person name="Baltrus D.A."/>
            <person name="Amieva M.R."/>
            <person name="Covacci A."/>
            <person name="Lowe T.M."/>
            <person name="Merrell D.S."/>
            <person name="Ottemann K.M."/>
            <person name="Stein M."/>
            <person name="Salama N.R."/>
            <person name="Guillemin K."/>
        </authorList>
    </citation>
    <scope>NUCLEOTIDE SEQUENCE [LARGE SCALE GENOMIC DNA]</scope>
    <source>
        <strain>G27</strain>
    </source>
</reference>
<evidence type="ECO:0000255" key="1">
    <source>
        <dbReference type="HAMAP-Rule" id="MF_01364"/>
    </source>
</evidence>
<evidence type="ECO:0000305" key="2"/>
<gene>
    <name evidence="1" type="primary">rpsZ</name>
    <name evidence="1" type="synonym">rpsN</name>
    <name type="ordered locus">HPG27_1255</name>
</gene>
<dbReference type="EMBL" id="CP001173">
    <property type="protein sequence ID" value="ACI28003.1"/>
    <property type="molecule type" value="Genomic_DNA"/>
</dbReference>
<dbReference type="RefSeq" id="WP_001085694.1">
    <property type="nucleotide sequence ID" value="NC_011333.1"/>
</dbReference>
<dbReference type="SMR" id="B5Z8V4"/>
<dbReference type="KEGG" id="hpg:HPG27_1255"/>
<dbReference type="HOGENOM" id="CLU_139869_3_0_7"/>
<dbReference type="Proteomes" id="UP000001735">
    <property type="component" value="Chromosome"/>
</dbReference>
<dbReference type="GO" id="GO:0005737">
    <property type="term" value="C:cytoplasm"/>
    <property type="evidence" value="ECO:0007669"/>
    <property type="project" value="UniProtKB-ARBA"/>
</dbReference>
<dbReference type="GO" id="GO:0015935">
    <property type="term" value="C:small ribosomal subunit"/>
    <property type="evidence" value="ECO:0007669"/>
    <property type="project" value="TreeGrafter"/>
</dbReference>
<dbReference type="GO" id="GO:0019843">
    <property type="term" value="F:rRNA binding"/>
    <property type="evidence" value="ECO:0007669"/>
    <property type="project" value="UniProtKB-UniRule"/>
</dbReference>
<dbReference type="GO" id="GO:0003735">
    <property type="term" value="F:structural constituent of ribosome"/>
    <property type="evidence" value="ECO:0007669"/>
    <property type="project" value="InterPro"/>
</dbReference>
<dbReference type="GO" id="GO:0008270">
    <property type="term" value="F:zinc ion binding"/>
    <property type="evidence" value="ECO:0007669"/>
    <property type="project" value="UniProtKB-UniRule"/>
</dbReference>
<dbReference type="GO" id="GO:0006412">
    <property type="term" value="P:translation"/>
    <property type="evidence" value="ECO:0007669"/>
    <property type="project" value="UniProtKB-UniRule"/>
</dbReference>
<dbReference type="FunFam" id="4.10.830.10:FF:000001">
    <property type="entry name" value="30S ribosomal protein S14 type Z"/>
    <property type="match status" value="1"/>
</dbReference>
<dbReference type="Gene3D" id="4.10.830.10">
    <property type="entry name" value="30s Ribosomal Protein S14, Chain N"/>
    <property type="match status" value="1"/>
</dbReference>
<dbReference type="HAMAP" id="MF_01364_B">
    <property type="entry name" value="Ribosomal_uS14_2_B"/>
    <property type="match status" value="1"/>
</dbReference>
<dbReference type="InterPro" id="IPR001209">
    <property type="entry name" value="Ribosomal_uS14"/>
</dbReference>
<dbReference type="InterPro" id="IPR023053">
    <property type="entry name" value="Ribosomal_uS14_bact"/>
</dbReference>
<dbReference type="InterPro" id="IPR018271">
    <property type="entry name" value="Ribosomal_uS14_CS"/>
</dbReference>
<dbReference type="InterPro" id="IPR043140">
    <property type="entry name" value="Ribosomal_uS14_sf"/>
</dbReference>
<dbReference type="NCBIfam" id="NF005974">
    <property type="entry name" value="PRK08061.1"/>
    <property type="match status" value="1"/>
</dbReference>
<dbReference type="PANTHER" id="PTHR19836">
    <property type="entry name" value="30S RIBOSOMAL PROTEIN S14"/>
    <property type="match status" value="1"/>
</dbReference>
<dbReference type="PANTHER" id="PTHR19836:SF19">
    <property type="entry name" value="SMALL RIBOSOMAL SUBUNIT PROTEIN US14M"/>
    <property type="match status" value="1"/>
</dbReference>
<dbReference type="Pfam" id="PF00253">
    <property type="entry name" value="Ribosomal_S14"/>
    <property type="match status" value="1"/>
</dbReference>
<dbReference type="SUPFAM" id="SSF57716">
    <property type="entry name" value="Glucocorticoid receptor-like (DNA-binding domain)"/>
    <property type="match status" value="1"/>
</dbReference>
<dbReference type="PROSITE" id="PS00527">
    <property type="entry name" value="RIBOSOMAL_S14"/>
    <property type="match status" value="1"/>
</dbReference>
<protein>
    <recommendedName>
        <fullName evidence="1">Small ribosomal subunit protein uS14</fullName>
    </recommendedName>
    <alternativeName>
        <fullName evidence="2">30S ribosomal protein S14 type Z</fullName>
    </alternativeName>
</protein>
<comment type="function">
    <text evidence="1">Binds 16S rRNA, required for the assembly of 30S particles and may also be responsible for determining the conformation of the 16S rRNA at the A site.</text>
</comment>
<comment type="cofactor">
    <cofactor evidence="1">
        <name>Zn(2+)</name>
        <dbReference type="ChEBI" id="CHEBI:29105"/>
    </cofactor>
    <text evidence="1">Binds 1 zinc ion per subunit.</text>
</comment>
<comment type="subunit">
    <text evidence="1">Part of the 30S ribosomal subunit. Contacts proteins S3 and S10.</text>
</comment>
<comment type="similarity">
    <text evidence="1">Belongs to the universal ribosomal protein uS14 family. Zinc-binding uS14 subfamily.</text>
</comment>
<proteinExistence type="inferred from homology"/>
<organism>
    <name type="scientific">Helicobacter pylori (strain G27)</name>
    <dbReference type="NCBI Taxonomy" id="563041"/>
    <lineage>
        <taxon>Bacteria</taxon>
        <taxon>Pseudomonadati</taxon>
        <taxon>Campylobacterota</taxon>
        <taxon>Epsilonproteobacteria</taxon>
        <taxon>Campylobacterales</taxon>
        <taxon>Helicobacteraceae</taxon>
        <taxon>Helicobacter</taxon>
    </lineage>
</organism>
<name>RS14Z_HELPG</name>
<accession>B5Z8V4</accession>